<sequence length="147" mass="15759">GLSAEQKTALKDSWKILAANGETMVKNSAAMFGLLFEKYPDTKKHFKTFDGDHFAAMKATGMGKAHGMSVFSGLGALVSSVDDGECVLGLAKKLSRNHTARGVTANDFKLMRSIFGEFLDKATGGKATESMKSAWDALLGVLIENHQ</sequence>
<evidence type="ECO:0000255" key="1">
    <source>
        <dbReference type="PROSITE-ProRule" id="PRU00238"/>
    </source>
</evidence>
<keyword id="KW-0903">Direct protein sequencing</keyword>
<keyword id="KW-0349">Heme</keyword>
<keyword id="KW-0408">Iron</keyword>
<keyword id="KW-0479">Metal-binding</keyword>
<keyword id="KW-0514">Muscle protein</keyword>
<keyword id="KW-0561">Oxygen transport</keyword>
<keyword id="KW-0813">Transport</keyword>
<reference key="1">
    <citation type="journal article" date="1993" name="Biochim. Biophys. Acta">
        <title>Amino-acid sequence of the cooperative dimeric myoglobin from the radular muscles of the marine gastropod Nassa mutabilis.</title>
        <authorList>
            <person name="Parente A."/>
            <person name="Verde C."/>
            <person name="Malorni A."/>
            <person name="Montecucchi P."/>
            <person name="Aniello F."/>
            <person name="Geraci G."/>
        </authorList>
    </citation>
    <scope>PROTEIN SEQUENCE</scope>
    <source>
        <tissue>Radular muscle</tissue>
    </source>
</reference>
<feature type="chain" id="PRO_0000052481" description="Globin">
    <location>
        <begin position="1"/>
        <end position="147"/>
    </location>
</feature>
<feature type="domain" description="Globin" evidence="1">
    <location>
        <begin position="1"/>
        <end position="147"/>
    </location>
</feature>
<feature type="binding site" description="distal binding residue" evidence="1">
    <location>
        <position position="66"/>
    </location>
    <ligand>
        <name>heme b</name>
        <dbReference type="ChEBI" id="CHEBI:60344"/>
    </ligand>
    <ligandPart>
        <name>Fe</name>
        <dbReference type="ChEBI" id="CHEBI:18248"/>
    </ligandPart>
</feature>
<feature type="binding site" description="proximal binding residue" evidence="1">
    <location>
        <position position="98"/>
    </location>
    <ligand>
        <name>heme b</name>
        <dbReference type="ChEBI" id="CHEBI:60344"/>
    </ligand>
    <ligandPart>
        <name>Fe</name>
        <dbReference type="ChEBI" id="CHEBI:18248"/>
    </ligandPart>
</feature>
<proteinExistence type="evidence at protein level"/>
<comment type="subunit">
    <text>Homodimer.</text>
</comment>
<comment type="miscellaneous">
    <text>In contrast to the other dimeric myoglobins, N.mutabilis myoglobin is a highly cooperative oxygen binding molecule.</text>
</comment>
<comment type="similarity">
    <text evidence="1">Belongs to the globin family.</text>
</comment>
<accession>P31331</accession>
<dbReference type="PIR" id="S29824">
    <property type="entry name" value="S29824"/>
</dbReference>
<dbReference type="SMR" id="P31331"/>
<dbReference type="GO" id="GO:0005576">
    <property type="term" value="C:extracellular region"/>
    <property type="evidence" value="ECO:0007669"/>
    <property type="project" value="InterPro"/>
</dbReference>
<dbReference type="GO" id="GO:0005833">
    <property type="term" value="C:hemoglobin complex"/>
    <property type="evidence" value="ECO:0007669"/>
    <property type="project" value="InterPro"/>
</dbReference>
<dbReference type="GO" id="GO:0020037">
    <property type="term" value="F:heme binding"/>
    <property type="evidence" value="ECO:0007669"/>
    <property type="project" value="InterPro"/>
</dbReference>
<dbReference type="GO" id="GO:0046872">
    <property type="term" value="F:metal ion binding"/>
    <property type="evidence" value="ECO:0007669"/>
    <property type="project" value="UniProtKB-KW"/>
</dbReference>
<dbReference type="GO" id="GO:0019825">
    <property type="term" value="F:oxygen binding"/>
    <property type="evidence" value="ECO:0007669"/>
    <property type="project" value="InterPro"/>
</dbReference>
<dbReference type="GO" id="GO:0005344">
    <property type="term" value="F:oxygen carrier activity"/>
    <property type="evidence" value="ECO:0007669"/>
    <property type="project" value="UniProtKB-KW"/>
</dbReference>
<dbReference type="CDD" id="cd01040">
    <property type="entry name" value="Mb-like"/>
    <property type="match status" value="1"/>
</dbReference>
<dbReference type="Gene3D" id="1.10.490.10">
    <property type="entry name" value="Globins"/>
    <property type="match status" value="1"/>
</dbReference>
<dbReference type="InterPro" id="IPR002336">
    <property type="entry name" value="Erythrocruorin"/>
</dbReference>
<dbReference type="InterPro" id="IPR000971">
    <property type="entry name" value="Globin"/>
</dbReference>
<dbReference type="InterPro" id="IPR009050">
    <property type="entry name" value="Globin-like_sf"/>
</dbReference>
<dbReference type="InterPro" id="IPR012292">
    <property type="entry name" value="Globin/Proto"/>
</dbReference>
<dbReference type="InterPro" id="IPR044399">
    <property type="entry name" value="Mb-like_M"/>
</dbReference>
<dbReference type="PANTHER" id="PTHR47217">
    <property type="entry name" value="GLOBIN-LIKE PROTEIN"/>
    <property type="match status" value="1"/>
</dbReference>
<dbReference type="PANTHER" id="PTHR47217:SF1">
    <property type="entry name" value="GLOBIN-LIKE PROTEIN"/>
    <property type="match status" value="1"/>
</dbReference>
<dbReference type="Pfam" id="PF00042">
    <property type="entry name" value="Globin"/>
    <property type="match status" value="1"/>
</dbReference>
<dbReference type="PRINTS" id="PR00611">
    <property type="entry name" value="ERYTHCRUORIN"/>
</dbReference>
<dbReference type="SUPFAM" id="SSF46458">
    <property type="entry name" value="Globin-like"/>
    <property type="match status" value="1"/>
</dbReference>
<dbReference type="PROSITE" id="PS01033">
    <property type="entry name" value="GLOBIN"/>
    <property type="match status" value="1"/>
</dbReference>
<protein>
    <recommendedName>
        <fullName>Globin</fullName>
    </recommendedName>
    <alternativeName>
        <fullName>Myoglobin</fullName>
    </alternativeName>
</protein>
<name>GLB_TRIMF</name>
<organism>
    <name type="scientific">Tritia mutabilis</name>
    <name type="common">Sea snail</name>
    <name type="synonym">Nassarius mutabilis</name>
    <dbReference type="NCBI Taxonomy" id="1934731"/>
    <lineage>
        <taxon>Eukaryota</taxon>
        <taxon>Metazoa</taxon>
        <taxon>Spiralia</taxon>
        <taxon>Lophotrochozoa</taxon>
        <taxon>Mollusca</taxon>
        <taxon>Gastropoda</taxon>
        <taxon>Caenogastropoda</taxon>
        <taxon>Neogastropoda</taxon>
        <taxon>Buccinoidea</taxon>
        <taxon>Nassariidae</taxon>
        <taxon>Nassariinae</taxon>
        <taxon>Tritia</taxon>
    </lineage>
</organism>